<reference key="1">
    <citation type="journal article" date="2005" name="Nature">
        <title>Virology: independent virus development outside a host.</title>
        <authorList>
            <person name="Haring M."/>
            <person name="Vestergaard G."/>
            <person name="Rachel R."/>
            <person name="Chen L."/>
            <person name="Garrett R.A."/>
            <person name="Prangishvili D."/>
        </authorList>
    </citation>
    <scope>NUCLEOTIDE SEQUENCE [GENOMIC DNA]</scope>
</reference>
<keyword id="KW-1185">Reference proteome</keyword>
<name>Y100_ATV</name>
<sequence>MEEAQPKLEKLEKFEYFLVNKLEEKIKETLIVENEVVRIVMIQRPIYDPFDKKFHTRGLLKIGKKYYTIVIEASKYFIFIKSKPIYLRIGWDELEEGEKQ</sequence>
<organismHost>
    <name type="scientific">Acidianus convivator</name>
    <dbReference type="NCBI Taxonomy" id="269667"/>
</organismHost>
<protein>
    <recommendedName>
        <fullName>Uncharacterized protein ORF100</fullName>
    </recommendedName>
</protein>
<proteinExistence type="predicted"/>
<dbReference type="EMBL" id="AJ888457">
    <property type="protein sequence ID" value="CAI59854.1"/>
    <property type="molecule type" value="Genomic_DNA"/>
</dbReference>
<dbReference type="RefSeq" id="YP_319857.1">
    <property type="nucleotide sequence ID" value="NC_007409.1"/>
</dbReference>
<dbReference type="GeneID" id="4484229"/>
<dbReference type="KEGG" id="vg:4484229"/>
<dbReference type="Proteomes" id="UP000002150">
    <property type="component" value="Genome"/>
</dbReference>
<organism>
    <name type="scientific">Acidianus two-tailed virus</name>
    <name type="common">ATV</name>
    <dbReference type="NCBI Taxonomy" id="315953"/>
    <lineage>
        <taxon>Viruses</taxon>
        <taxon>Viruses incertae sedis</taxon>
        <taxon>Bicaudaviridae</taxon>
        <taxon>Bicaudavirus</taxon>
    </lineage>
</organism>
<accession>Q3V4W0</accession>
<feature type="chain" id="PRO_0000389082" description="Uncharacterized protein ORF100">
    <location>
        <begin position="1"/>
        <end position="100"/>
    </location>
</feature>